<feature type="chain" id="PRO_1000201294" description="tRNA U34 carboxymethyltransferase">
    <location>
        <begin position="1"/>
        <end position="323"/>
    </location>
</feature>
<feature type="binding site" evidence="1">
    <location>
        <position position="91"/>
    </location>
    <ligand>
        <name>carboxy-S-adenosyl-L-methionine</name>
        <dbReference type="ChEBI" id="CHEBI:134278"/>
    </ligand>
</feature>
<feature type="binding site" evidence="1">
    <location>
        <position position="105"/>
    </location>
    <ligand>
        <name>carboxy-S-adenosyl-L-methionine</name>
        <dbReference type="ChEBI" id="CHEBI:134278"/>
    </ligand>
</feature>
<feature type="binding site" evidence="1">
    <location>
        <position position="110"/>
    </location>
    <ligand>
        <name>carboxy-S-adenosyl-L-methionine</name>
        <dbReference type="ChEBI" id="CHEBI:134278"/>
    </ligand>
</feature>
<feature type="binding site" evidence="1">
    <location>
        <position position="130"/>
    </location>
    <ligand>
        <name>carboxy-S-adenosyl-L-methionine</name>
        <dbReference type="ChEBI" id="CHEBI:134278"/>
    </ligand>
</feature>
<feature type="binding site" evidence="1">
    <location>
        <begin position="152"/>
        <end position="154"/>
    </location>
    <ligand>
        <name>carboxy-S-adenosyl-L-methionine</name>
        <dbReference type="ChEBI" id="CHEBI:134278"/>
    </ligand>
</feature>
<feature type="binding site" evidence="1">
    <location>
        <begin position="181"/>
        <end position="182"/>
    </location>
    <ligand>
        <name>carboxy-S-adenosyl-L-methionine</name>
        <dbReference type="ChEBI" id="CHEBI:134278"/>
    </ligand>
</feature>
<feature type="binding site" evidence="1">
    <location>
        <position position="196"/>
    </location>
    <ligand>
        <name>carboxy-S-adenosyl-L-methionine</name>
        <dbReference type="ChEBI" id="CHEBI:134278"/>
    </ligand>
</feature>
<feature type="binding site" evidence="1">
    <location>
        <position position="200"/>
    </location>
    <ligand>
        <name>carboxy-S-adenosyl-L-methionine</name>
        <dbReference type="ChEBI" id="CHEBI:134278"/>
    </ligand>
</feature>
<feature type="binding site" evidence="1">
    <location>
        <position position="315"/>
    </location>
    <ligand>
        <name>carboxy-S-adenosyl-L-methionine</name>
        <dbReference type="ChEBI" id="CHEBI:134278"/>
    </ligand>
</feature>
<protein>
    <recommendedName>
        <fullName evidence="1">tRNA U34 carboxymethyltransferase</fullName>
        <ecNumber evidence="1">2.5.1.-</ecNumber>
    </recommendedName>
</protein>
<reference key="1">
    <citation type="journal article" date="2009" name="PLoS Genet.">
        <title>Organised genome dynamics in the Escherichia coli species results in highly diverse adaptive paths.</title>
        <authorList>
            <person name="Touchon M."/>
            <person name="Hoede C."/>
            <person name="Tenaillon O."/>
            <person name="Barbe V."/>
            <person name="Baeriswyl S."/>
            <person name="Bidet P."/>
            <person name="Bingen E."/>
            <person name="Bonacorsi S."/>
            <person name="Bouchier C."/>
            <person name="Bouvet O."/>
            <person name="Calteau A."/>
            <person name="Chiapello H."/>
            <person name="Clermont O."/>
            <person name="Cruveiller S."/>
            <person name="Danchin A."/>
            <person name="Diard M."/>
            <person name="Dossat C."/>
            <person name="Karoui M.E."/>
            <person name="Frapy E."/>
            <person name="Garry L."/>
            <person name="Ghigo J.M."/>
            <person name="Gilles A.M."/>
            <person name="Johnson J."/>
            <person name="Le Bouguenec C."/>
            <person name="Lescat M."/>
            <person name="Mangenot S."/>
            <person name="Martinez-Jehanne V."/>
            <person name="Matic I."/>
            <person name="Nassif X."/>
            <person name="Oztas S."/>
            <person name="Petit M.A."/>
            <person name="Pichon C."/>
            <person name="Rouy Z."/>
            <person name="Ruf C.S."/>
            <person name="Schneider D."/>
            <person name="Tourret J."/>
            <person name="Vacherie B."/>
            <person name="Vallenet D."/>
            <person name="Medigue C."/>
            <person name="Rocha E.P.C."/>
            <person name="Denamur E."/>
        </authorList>
    </citation>
    <scope>NUCLEOTIDE SEQUENCE [LARGE SCALE GENOMIC DNA]</scope>
    <source>
        <strain>S88 / ExPEC</strain>
    </source>
</reference>
<organism>
    <name type="scientific">Escherichia coli O45:K1 (strain S88 / ExPEC)</name>
    <dbReference type="NCBI Taxonomy" id="585035"/>
    <lineage>
        <taxon>Bacteria</taxon>
        <taxon>Pseudomonadati</taxon>
        <taxon>Pseudomonadota</taxon>
        <taxon>Gammaproteobacteria</taxon>
        <taxon>Enterobacterales</taxon>
        <taxon>Enterobacteriaceae</taxon>
        <taxon>Escherichia</taxon>
    </lineage>
</organism>
<evidence type="ECO:0000255" key="1">
    <source>
        <dbReference type="HAMAP-Rule" id="MF_01590"/>
    </source>
</evidence>
<name>CMOB_ECO45</name>
<keyword id="KW-1185">Reference proteome</keyword>
<keyword id="KW-0808">Transferase</keyword>
<keyword id="KW-0819">tRNA processing</keyword>
<comment type="function">
    <text evidence="1">Catalyzes carboxymethyl transfer from carboxy-S-adenosyl-L-methionine (Cx-SAM) to 5-hydroxyuridine (ho5U) to form 5-carboxymethoxyuridine (cmo5U) at position 34 in tRNAs.</text>
</comment>
<comment type="catalytic activity">
    <reaction evidence="1">
        <text>carboxy-S-adenosyl-L-methionine + 5-hydroxyuridine(34) in tRNA = 5-carboxymethoxyuridine(34) in tRNA + S-adenosyl-L-homocysteine + H(+)</text>
        <dbReference type="Rhea" id="RHEA:52848"/>
        <dbReference type="Rhea" id="RHEA-COMP:13381"/>
        <dbReference type="Rhea" id="RHEA-COMP:13383"/>
        <dbReference type="ChEBI" id="CHEBI:15378"/>
        <dbReference type="ChEBI" id="CHEBI:57856"/>
        <dbReference type="ChEBI" id="CHEBI:134278"/>
        <dbReference type="ChEBI" id="CHEBI:136877"/>
        <dbReference type="ChEBI" id="CHEBI:136879"/>
    </reaction>
</comment>
<comment type="subunit">
    <text evidence="1">Homotetramer.</text>
</comment>
<comment type="similarity">
    <text evidence="1">Belongs to the class I-like SAM-binding methyltransferase superfamily. CmoB family.</text>
</comment>
<proteinExistence type="inferred from homology"/>
<accession>B7MBT0</accession>
<sequence>MIDFGNFYSLIAKNHLSHWLETLPAQIANWQREQQHGLFKQWSNAVEFLPEIKPYRLDLLHSVTAESEEPLSAGQIKRIETLMRNLMPWRKGPFSLYGVNIDTEWRSDWKWDRVLPHLSDLTGRTILDVGCGSGYHMWRMIGAGAHLAVGIDPTQLFLCQFEAVRKLLGNDQRAHLLPLGIEQLPALKAFDTVFSMGVLYHRRSPLEHLWQLKDQLVNEGELVLETLVIDGDENTVLVPGDRYAQMRNVYFIPSALALKNWLKKCGFVDIRIADVSVTTTEEQRRTEWMVTESLADFLDPHDPGKTVEGYPAPKRAVLIARKP</sequence>
<dbReference type="EC" id="2.5.1.-" evidence="1"/>
<dbReference type="EMBL" id="CU928161">
    <property type="protein sequence ID" value="CAR03232.1"/>
    <property type="molecule type" value="Genomic_DNA"/>
</dbReference>
<dbReference type="RefSeq" id="WP_000564725.1">
    <property type="nucleotide sequence ID" value="NC_011742.1"/>
</dbReference>
<dbReference type="SMR" id="B7MBT0"/>
<dbReference type="GeneID" id="75171943"/>
<dbReference type="KEGG" id="ecz:ECS88_1929"/>
<dbReference type="HOGENOM" id="CLU_052665_0_0_6"/>
<dbReference type="Proteomes" id="UP000000747">
    <property type="component" value="Chromosome"/>
</dbReference>
<dbReference type="GO" id="GO:0016765">
    <property type="term" value="F:transferase activity, transferring alkyl or aryl (other than methyl) groups"/>
    <property type="evidence" value="ECO:0007669"/>
    <property type="project" value="UniProtKB-UniRule"/>
</dbReference>
<dbReference type="GO" id="GO:0002098">
    <property type="term" value="P:tRNA wobble uridine modification"/>
    <property type="evidence" value="ECO:0007669"/>
    <property type="project" value="InterPro"/>
</dbReference>
<dbReference type="CDD" id="cd02440">
    <property type="entry name" value="AdoMet_MTases"/>
    <property type="match status" value="1"/>
</dbReference>
<dbReference type="FunFam" id="3.40.50.150:FF:000080">
    <property type="entry name" value="tRNA U34 carboxymethyltransferase"/>
    <property type="match status" value="1"/>
</dbReference>
<dbReference type="Gene3D" id="3.40.50.150">
    <property type="entry name" value="Vaccinia Virus protein VP39"/>
    <property type="match status" value="1"/>
</dbReference>
<dbReference type="HAMAP" id="MF_01590">
    <property type="entry name" value="tRNA_carboxymethyltr_CmoB"/>
    <property type="match status" value="1"/>
</dbReference>
<dbReference type="InterPro" id="IPR010017">
    <property type="entry name" value="CmoB"/>
</dbReference>
<dbReference type="InterPro" id="IPR027555">
    <property type="entry name" value="Mo5U34_MeTrfas-like"/>
</dbReference>
<dbReference type="InterPro" id="IPR029063">
    <property type="entry name" value="SAM-dependent_MTases_sf"/>
</dbReference>
<dbReference type="NCBIfam" id="NF011650">
    <property type="entry name" value="PRK15068.1"/>
    <property type="match status" value="1"/>
</dbReference>
<dbReference type="NCBIfam" id="TIGR00452">
    <property type="entry name" value="tRNA 5-methoxyuridine(34)/uridine 5-oxyacetic acid(34) synthase CmoB"/>
    <property type="match status" value="1"/>
</dbReference>
<dbReference type="PANTHER" id="PTHR43861">
    <property type="entry name" value="TRANS-ACONITATE 2-METHYLTRANSFERASE-RELATED"/>
    <property type="match status" value="1"/>
</dbReference>
<dbReference type="Pfam" id="PF08003">
    <property type="entry name" value="Methyltransf_9"/>
    <property type="match status" value="1"/>
</dbReference>
<dbReference type="SUPFAM" id="SSF53335">
    <property type="entry name" value="S-adenosyl-L-methionine-dependent methyltransferases"/>
    <property type="match status" value="1"/>
</dbReference>
<gene>
    <name evidence="1" type="primary">cmoB</name>
    <name type="ordered locus">ECS88_1929</name>
</gene>